<feature type="chain" id="PRO_1000020785" description="Glycerol kinase">
    <location>
        <begin position="1"/>
        <end position="494"/>
    </location>
</feature>
<feature type="binding site" evidence="1">
    <location>
        <position position="13"/>
    </location>
    <ligand>
        <name>ADP</name>
        <dbReference type="ChEBI" id="CHEBI:456216"/>
    </ligand>
</feature>
<feature type="binding site" evidence="1">
    <location>
        <position position="13"/>
    </location>
    <ligand>
        <name>ATP</name>
        <dbReference type="ChEBI" id="CHEBI:30616"/>
    </ligand>
</feature>
<feature type="binding site" evidence="1">
    <location>
        <position position="13"/>
    </location>
    <ligand>
        <name>sn-glycerol 3-phosphate</name>
        <dbReference type="ChEBI" id="CHEBI:57597"/>
    </ligand>
</feature>
<feature type="binding site" evidence="1">
    <location>
        <position position="14"/>
    </location>
    <ligand>
        <name>ATP</name>
        <dbReference type="ChEBI" id="CHEBI:30616"/>
    </ligand>
</feature>
<feature type="binding site" evidence="1">
    <location>
        <position position="15"/>
    </location>
    <ligand>
        <name>ATP</name>
        <dbReference type="ChEBI" id="CHEBI:30616"/>
    </ligand>
</feature>
<feature type="binding site" evidence="1">
    <location>
        <position position="17"/>
    </location>
    <ligand>
        <name>ADP</name>
        <dbReference type="ChEBI" id="CHEBI:456216"/>
    </ligand>
</feature>
<feature type="binding site" evidence="1">
    <location>
        <position position="83"/>
    </location>
    <ligand>
        <name>glycerol</name>
        <dbReference type="ChEBI" id="CHEBI:17754"/>
    </ligand>
</feature>
<feature type="binding site" evidence="1">
    <location>
        <position position="83"/>
    </location>
    <ligand>
        <name>sn-glycerol 3-phosphate</name>
        <dbReference type="ChEBI" id="CHEBI:57597"/>
    </ligand>
</feature>
<feature type="binding site" evidence="1">
    <location>
        <position position="84"/>
    </location>
    <ligand>
        <name>glycerol</name>
        <dbReference type="ChEBI" id="CHEBI:17754"/>
    </ligand>
</feature>
<feature type="binding site" evidence="1">
    <location>
        <position position="84"/>
    </location>
    <ligand>
        <name>sn-glycerol 3-phosphate</name>
        <dbReference type="ChEBI" id="CHEBI:57597"/>
    </ligand>
</feature>
<feature type="binding site" evidence="1">
    <location>
        <position position="135"/>
    </location>
    <ligand>
        <name>glycerol</name>
        <dbReference type="ChEBI" id="CHEBI:17754"/>
    </ligand>
</feature>
<feature type="binding site" evidence="1">
    <location>
        <position position="135"/>
    </location>
    <ligand>
        <name>sn-glycerol 3-phosphate</name>
        <dbReference type="ChEBI" id="CHEBI:57597"/>
    </ligand>
</feature>
<feature type="binding site" evidence="1">
    <location>
        <position position="244"/>
    </location>
    <ligand>
        <name>glycerol</name>
        <dbReference type="ChEBI" id="CHEBI:17754"/>
    </ligand>
</feature>
<feature type="binding site" evidence="1">
    <location>
        <position position="244"/>
    </location>
    <ligand>
        <name>sn-glycerol 3-phosphate</name>
        <dbReference type="ChEBI" id="CHEBI:57597"/>
    </ligand>
</feature>
<feature type="binding site" evidence="1">
    <location>
        <position position="245"/>
    </location>
    <ligand>
        <name>glycerol</name>
        <dbReference type="ChEBI" id="CHEBI:17754"/>
    </ligand>
</feature>
<feature type="binding site" evidence="1">
    <location>
        <position position="266"/>
    </location>
    <ligand>
        <name>ADP</name>
        <dbReference type="ChEBI" id="CHEBI:456216"/>
    </ligand>
</feature>
<feature type="binding site" evidence="1">
    <location>
        <position position="266"/>
    </location>
    <ligand>
        <name>ATP</name>
        <dbReference type="ChEBI" id="CHEBI:30616"/>
    </ligand>
</feature>
<feature type="binding site" evidence="1">
    <location>
        <position position="309"/>
    </location>
    <ligand>
        <name>ADP</name>
        <dbReference type="ChEBI" id="CHEBI:456216"/>
    </ligand>
</feature>
<feature type="binding site" evidence="1">
    <location>
        <position position="309"/>
    </location>
    <ligand>
        <name>ATP</name>
        <dbReference type="ChEBI" id="CHEBI:30616"/>
    </ligand>
</feature>
<feature type="binding site" evidence="1">
    <location>
        <position position="313"/>
    </location>
    <ligand>
        <name>ATP</name>
        <dbReference type="ChEBI" id="CHEBI:30616"/>
    </ligand>
</feature>
<feature type="binding site" evidence="1">
    <location>
        <position position="410"/>
    </location>
    <ligand>
        <name>ADP</name>
        <dbReference type="ChEBI" id="CHEBI:456216"/>
    </ligand>
</feature>
<feature type="binding site" evidence="1">
    <location>
        <position position="410"/>
    </location>
    <ligand>
        <name>ATP</name>
        <dbReference type="ChEBI" id="CHEBI:30616"/>
    </ligand>
</feature>
<feature type="binding site" evidence="1">
    <location>
        <position position="414"/>
    </location>
    <ligand>
        <name>ADP</name>
        <dbReference type="ChEBI" id="CHEBI:456216"/>
    </ligand>
</feature>
<organism>
    <name type="scientific">Shewanella sp. (strain W3-18-1)</name>
    <dbReference type="NCBI Taxonomy" id="351745"/>
    <lineage>
        <taxon>Bacteria</taxon>
        <taxon>Pseudomonadati</taxon>
        <taxon>Pseudomonadota</taxon>
        <taxon>Gammaproteobacteria</taxon>
        <taxon>Alteromonadales</taxon>
        <taxon>Shewanellaceae</taxon>
        <taxon>Shewanella</taxon>
    </lineage>
</organism>
<reference key="1">
    <citation type="submission" date="2006-12" db="EMBL/GenBank/DDBJ databases">
        <title>Complete sequence of Shewanella sp. W3-18-1.</title>
        <authorList>
            <consortium name="US DOE Joint Genome Institute"/>
            <person name="Copeland A."/>
            <person name="Lucas S."/>
            <person name="Lapidus A."/>
            <person name="Barry K."/>
            <person name="Detter J.C."/>
            <person name="Glavina del Rio T."/>
            <person name="Hammon N."/>
            <person name="Israni S."/>
            <person name="Dalin E."/>
            <person name="Tice H."/>
            <person name="Pitluck S."/>
            <person name="Chain P."/>
            <person name="Malfatti S."/>
            <person name="Shin M."/>
            <person name="Vergez L."/>
            <person name="Schmutz J."/>
            <person name="Larimer F."/>
            <person name="Land M."/>
            <person name="Hauser L."/>
            <person name="Kyrpides N."/>
            <person name="Lykidis A."/>
            <person name="Tiedje J."/>
            <person name="Richardson P."/>
        </authorList>
    </citation>
    <scope>NUCLEOTIDE SEQUENCE [LARGE SCALE GENOMIC DNA]</scope>
    <source>
        <strain>W3-18-1</strain>
    </source>
</reference>
<dbReference type="EC" id="2.7.1.30" evidence="1"/>
<dbReference type="EMBL" id="CP000503">
    <property type="protein sequence ID" value="ABM23230.1"/>
    <property type="molecule type" value="Genomic_DNA"/>
</dbReference>
<dbReference type="RefSeq" id="WP_011787773.1">
    <property type="nucleotide sequence ID" value="NC_008750.1"/>
</dbReference>
<dbReference type="SMR" id="A1REY5"/>
<dbReference type="KEGG" id="shw:Sputw3181_0379"/>
<dbReference type="HOGENOM" id="CLU_009281_2_3_6"/>
<dbReference type="UniPathway" id="UPA00618">
    <property type="reaction ID" value="UER00672"/>
</dbReference>
<dbReference type="Proteomes" id="UP000002597">
    <property type="component" value="Chromosome"/>
</dbReference>
<dbReference type="GO" id="GO:0005829">
    <property type="term" value="C:cytosol"/>
    <property type="evidence" value="ECO:0007669"/>
    <property type="project" value="TreeGrafter"/>
</dbReference>
<dbReference type="GO" id="GO:0005524">
    <property type="term" value="F:ATP binding"/>
    <property type="evidence" value="ECO:0007669"/>
    <property type="project" value="UniProtKB-UniRule"/>
</dbReference>
<dbReference type="GO" id="GO:0004370">
    <property type="term" value="F:glycerol kinase activity"/>
    <property type="evidence" value="ECO:0000250"/>
    <property type="project" value="UniProtKB"/>
</dbReference>
<dbReference type="GO" id="GO:0019563">
    <property type="term" value="P:glycerol catabolic process"/>
    <property type="evidence" value="ECO:0007669"/>
    <property type="project" value="UniProtKB-UniRule"/>
</dbReference>
<dbReference type="GO" id="GO:0006071">
    <property type="term" value="P:glycerol metabolic process"/>
    <property type="evidence" value="ECO:0000250"/>
    <property type="project" value="UniProtKB"/>
</dbReference>
<dbReference type="GO" id="GO:0006072">
    <property type="term" value="P:glycerol-3-phosphate metabolic process"/>
    <property type="evidence" value="ECO:0007669"/>
    <property type="project" value="InterPro"/>
</dbReference>
<dbReference type="CDD" id="cd07786">
    <property type="entry name" value="FGGY_EcGK_like"/>
    <property type="match status" value="1"/>
</dbReference>
<dbReference type="FunFam" id="3.30.420.40:FF:000007">
    <property type="entry name" value="Glycerol kinase"/>
    <property type="match status" value="1"/>
</dbReference>
<dbReference type="FunFam" id="3.30.420.40:FF:000008">
    <property type="entry name" value="Glycerol kinase"/>
    <property type="match status" value="1"/>
</dbReference>
<dbReference type="Gene3D" id="3.30.420.40">
    <property type="match status" value="2"/>
</dbReference>
<dbReference type="HAMAP" id="MF_00186">
    <property type="entry name" value="Glycerol_kin"/>
    <property type="match status" value="1"/>
</dbReference>
<dbReference type="InterPro" id="IPR043129">
    <property type="entry name" value="ATPase_NBD"/>
</dbReference>
<dbReference type="InterPro" id="IPR000577">
    <property type="entry name" value="Carb_kinase_FGGY"/>
</dbReference>
<dbReference type="InterPro" id="IPR018483">
    <property type="entry name" value="Carb_kinase_FGGY_CS"/>
</dbReference>
<dbReference type="InterPro" id="IPR018485">
    <property type="entry name" value="FGGY_C"/>
</dbReference>
<dbReference type="InterPro" id="IPR018484">
    <property type="entry name" value="FGGY_N"/>
</dbReference>
<dbReference type="InterPro" id="IPR005999">
    <property type="entry name" value="Glycerol_kin"/>
</dbReference>
<dbReference type="NCBIfam" id="TIGR01311">
    <property type="entry name" value="glycerol_kin"/>
    <property type="match status" value="1"/>
</dbReference>
<dbReference type="NCBIfam" id="NF000756">
    <property type="entry name" value="PRK00047.1"/>
    <property type="match status" value="1"/>
</dbReference>
<dbReference type="PANTHER" id="PTHR10196:SF69">
    <property type="entry name" value="GLYCEROL KINASE"/>
    <property type="match status" value="1"/>
</dbReference>
<dbReference type="PANTHER" id="PTHR10196">
    <property type="entry name" value="SUGAR KINASE"/>
    <property type="match status" value="1"/>
</dbReference>
<dbReference type="Pfam" id="PF02782">
    <property type="entry name" value="FGGY_C"/>
    <property type="match status" value="1"/>
</dbReference>
<dbReference type="Pfam" id="PF00370">
    <property type="entry name" value="FGGY_N"/>
    <property type="match status" value="1"/>
</dbReference>
<dbReference type="PIRSF" id="PIRSF000538">
    <property type="entry name" value="GlpK"/>
    <property type="match status" value="1"/>
</dbReference>
<dbReference type="SUPFAM" id="SSF53067">
    <property type="entry name" value="Actin-like ATPase domain"/>
    <property type="match status" value="2"/>
</dbReference>
<dbReference type="PROSITE" id="PS00933">
    <property type="entry name" value="FGGY_KINASES_1"/>
    <property type="match status" value="1"/>
</dbReference>
<dbReference type="PROSITE" id="PS00445">
    <property type="entry name" value="FGGY_KINASES_2"/>
    <property type="match status" value="1"/>
</dbReference>
<accession>A1REY5</accession>
<keyword id="KW-0067">ATP-binding</keyword>
<keyword id="KW-0319">Glycerol metabolism</keyword>
<keyword id="KW-0418">Kinase</keyword>
<keyword id="KW-0547">Nucleotide-binding</keyword>
<keyword id="KW-0808">Transferase</keyword>
<sequence>MQKKYVVALDQGTTSSRAIVFDHDANIVSVSQREFTQLYPNPGWVEHDPMEIWASQSSVLVEALARAGIHSDEVAAIGITNQRETTVIWEKATGKPIYNAIVWQCRRSAEICEQLKAQGLEEYVRENTGLLLDPYFSGTKIKWILDNVPNAREQADRGELLFGTIDTWLVWKLTEGKVHVTDPTNAARTLLFNIHSLTWDNKLLEALDIPLSMLPDVKPSCSVYGTTRIAGEGSEIQVAGMAGDQQAALFGQLCVEPGMAKNTYGTGCFLLMNTGTKAVRSNHGLLTTVAVGPKGEVNYALEGSVFMGGATIQWLRDELGLIRDASDTEYFASKVADTNGVYLVPAFVGLGAPYWDPNARGALFGLTRGANRNHIIRAALESIAYQSKDLLDAMIKDSGVSLKRLKVDGGAVANDFLMQFQADITDVEVLRPSVCETTALGAAFLAGLAVGFWESVIELEHKACIDKHFIPNIDAQTRVQLYAGWQDAVARTRT</sequence>
<name>GLPK_SHESW</name>
<protein>
    <recommendedName>
        <fullName evidence="1">Glycerol kinase</fullName>
        <ecNumber evidence="1">2.7.1.30</ecNumber>
    </recommendedName>
    <alternativeName>
        <fullName evidence="1">ATP:glycerol 3-phosphotransferase</fullName>
    </alternativeName>
    <alternativeName>
        <fullName evidence="1">Glycerokinase</fullName>
        <shortName evidence="1">GK</shortName>
    </alternativeName>
</protein>
<proteinExistence type="inferred from homology"/>
<evidence type="ECO:0000255" key="1">
    <source>
        <dbReference type="HAMAP-Rule" id="MF_00186"/>
    </source>
</evidence>
<gene>
    <name evidence="1" type="primary">glpK</name>
    <name type="ordered locus">Sputw3181_0379</name>
</gene>
<comment type="function">
    <text evidence="1">Key enzyme in the regulation of glycerol uptake and metabolism. Catalyzes the phosphorylation of glycerol to yield sn-glycerol 3-phosphate.</text>
</comment>
<comment type="catalytic activity">
    <reaction evidence="1">
        <text>glycerol + ATP = sn-glycerol 3-phosphate + ADP + H(+)</text>
        <dbReference type="Rhea" id="RHEA:21644"/>
        <dbReference type="ChEBI" id="CHEBI:15378"/>
        <dbReference type="ChEBI" id="CHEBI:17754"/>
        <dbReference type="ChEBI" id="CHEBI:30616"/>
        <dbReference type="ChEBI" id="CHEBI:57597"/>
        <dbReference type="ChEBI" id="CHEBI:456216"/>
        <dbReference type="EC" id="2.7.1.30"/>
    </reaction>
</comment>
<comment type="activity regulation">
    <text evidence="1">Inhibited by fructose 1,6-bisphosphate (FBP).</text>
</comment>
<comment type="pathway">
    <text evidence="1">Polyol metabolism; glycerol degradation via glycerol kinase pathway; sn-glycerol 3-phosphate from glycerol: step 1/1.</text>
</comment>
<comment type="similarity">
    <text evidence="1">Belongs to the FGGY kinase family.</text>
</comment>